<sequence>MRLLEPIKVGKIELKNRVMFPPMTTGYEGRDGTIVEQSFNFYKRLAEGGVSYIVLGDVAPVNTISPTPKLFHDGQIEAFRKLADAVHEFDCKLGIQIFHPEYDVEALAELFRKGDMEGGRAKMRHDMVHFIQEVTEEQLNSILDKIGECVKRAQSAGVDIIEVHGDRLIGSFCSTLINRRTDSYGGSFENRIRFALRVVDKIREVAPDICIDYKLPVVTENPLRGKGGLMINEAVEFAKILERSGVDMIHVGQANHTGNMNDTIPAMGTQPYCFMSKYTKQIKEAVSIPVSSVGRIVTPENAEALIENGVCDIVGLGRSLLADPDYVKKLEAGEGRRIRHCMMCNKGCTDAIQNRKFLSCVLNAENGYEYERTITPSDEKKKVVVIGGGVAGMEAARVASVKGHEVVLFEKETTLGGQLNIASVPPRKSEMNRALRYLTNEMKELHVDLRLGRTADAEMILAENPDNVIVAAGAHNVIPPIEGSKMPHVFDAWKVLNHEELPSGRVVVIGGGLVGAETAELLAEMGCQVSVVEMMEEIAKEESKTVRPVLFESFEKYQVQLLTGTKVTAITANSVEAENAEGKVSLPCDYVVLAVGARPNLFDVQALEDKGVQVSFVGDCNERAADINRAVEEGYLAANVL</sequence>
<protein>
    <recommendedName>
        <fullName evidence="3">Bilirubin reductase</fullName>
        <ecNumber evidence="5">1.3.-.-</ecNumber>
    </recommendedName>
    <alternativeName>
        <fullName evidence="3">Bilirubin reductase operon protein R</fullName>
    </alternativeName>
</protein>
<dbReference type="EC" id="1.3.-.-" evidence="5"/>
<dbReference type="EMBL" id="AZJF01000004">
    <property type="protein sequence ID" value="ETD18187.1"/>
    <property type="molecule type" value="Genomic_DNA"/>
</dbReference>
<dbReference type="RefSeq" id="WP_009244284.1">
    <property type="nucleotide sequence ID" value="NZ_KI669415.1"/>
</dbReference>
<dbReference type="SMR" id="A0A829NF98"/>
<dbReference type="UniPathway" id="UPA00684"/>
<dbReference type="Proteomes" id="UP000018690">
    <property type="component" value="Unassembled WGS sequence"/>
</dbReference>
<dbReference type="GO" id="GO:0051539">
    <property type="term" value="F:4 iron, 4 sulfur cluster binding"/>
    <property type="evidence" value="ECO:0007669"/>
    <property type="project" value="UniProtKB-KW"/>
</dbReference>
<dbReference type="GO" id="GO:0010181">
    <property type="term" value="F:FMN binding"/>
    <property type="evidence" value="ECO:0007669"/>
    <property type="project" value="InterPro"/>
</dbReference>
<dbReference type="GO" id="GO:0046872">
    <property type="term" value="F:metal ion binding"/>
    <property type="evidence" value="ECO:0007669"/>
    <property type="project" value="UniProtKB-KW"/>
</dbReference>
<dbReference type="GO" id="GO:0016627">
    <property type="term" value="F:oxidoreductase activity, acting on the CH-CH group of donors"/>
    <property type="evidence" value="ECO:0000314"/>
    <property type="project" value="UniProtKB"/>
</dbReference>
<dbReference type="GO" id="GO:0006787">
    <property type="term" value="P:porphyrin-containing compound catabolic process"/>
    <property type="evidence" value="ECO:0000314"/>
    <property type="project" value="UniProtKB"/>
</dbReference>
<dbReference type="CDD" id="cd02803">
    <property type="entry name" value="OYE_like_FMN_family"/>
    <property type="match status" value="1"/>
</dbReference>
<dbReference type="Gene3D" id="3.20.20.70">
    <property type="entry name" value="Aldolase class I"/>
    <property type="match status" value="1"/>
</dbReference>
<dbReference type="Gene3D" id="3.50.50.60">
    <property type="entry name" value="FAD/NAD(P)-binding domain"/>
    <property type="match status" value="1"/>
</dbReference>
<dbReference type="Gene3D" id="3.40.50.720">
    <property type="entry name" value="NAD(P)-binding Rossmann-like Domain"/>
    <property type="match status" value="1"/>
</dbReference>
<dbReference type="InterPro" id="IPR013785">
    <property type="entry name" value="Aldolase_TIM"/>
</dbReference>
<dbReference type="InterPro" id="IPR054629">
    <property type="entry name" value="BilR_N"/>
</dbReference>
<dbReference type="InterPro" id="IPR036188">
    <property type="entry name" value="FAD/NAD-bd_sf"/>
</dbReference>
<dbReference type="InterPro" id="IPR023753">
    <property type="entry name" value="FAD/NAD-binding_dom"/>
</dbReference>
<dbReference type="InterPro" id="IPR051793">
    <property type="entry name" value="NADH:flavin_oxidoreductase"/>
</dbReference>
<dbReference type="InterPro" id="IPR001155">
    <property type="entry name" value="OxRdtase_FMN_N"/>
</dbReference>
<dbReference type="NCBIfam" id="NF045599">
    <property type="entry name" value="bili_reduct_long"/>
    <property type="match status" value="1"/>
</dbReference>
<dbReference type="NCBIfam" id="NF045592">
    <property type="entry name" value="bili_reduct_N"/>
    <property type="match status" value="1"/>
</dbReference>
<dbReference type="PANTHER" id="PTHR42917">
    <property type="entry name" value="2,4-DIENOYL-COA REDUCTASE"/>
    <property type="match status" value="1"/>
</dbReference>
<dbReference type="PANTHER" id="PTHR42917:SF2">
    <property type="entry name" value="2,4-DIENOYL-COA REDUCTASE [(2E)-ENOYL-COA-PRODUCING]"/>
    <property type="match status" value="1"/>
</dbReference>
<dbReference type="Pfam" id="PF00724">
    <property type="entry name" value="Oxidored_FMN"/>
    <property type="match status" value="1"/>
</dbReference>
<dbReference type="Pfam" id="PF07992">
    <property type="entry name" value="Pyr_redox_2"/>
    <property type="match status" value="1"/>
</dbReference>
<dbReference type="PRINTS" id="PR00368">
    <property type="entry name" value="FADPNR"/>
</dbReference>
<dbReference type="PRINTS" id="PR00469">
    <property type="entry name" value="PNDRDTASEII"/>
</dbReference>
<dbReference type="SUPFAM" id="SSF51905">
    <property type="entry name" value="FAD/NAD(P)-binding domain"/>
    <property type="match status" value="1"/>
</dbReference>
<dbReference type="SUPFAM" id="SSF51395">
    <property type="entry name" value="FMN-linked oxidoreductases"/>
    <property type="match status" value="1"/>
</dbReference>
<reference key="1">
    <citation type="submission" date="2013-10" db="EMBL/GenBank/DDBJ databases">
        <title>The Genome Sequence of Ruminococcus gnavus CC55_001C.</title>
        <authorList>
            <consortium name="The Broad Institute Genomics Platform"/>
            <person name="Earl A."/>
            <person name="Allen-Vercoe E."/>
            <person name="Daigneault M."/>
            <person name="Young S.K."/>
            <person name="Zeng Q."/>
            <person name="Gargeya S."/>
            <person name="Fitzgerald M."/>
            <person name="Abouelleil A."/>
            <person name="Alvarado L."/>
            <person name="Chapman S.B."/>
            <person name="Gainer-Dewar J."/>
            <person name="Goldberg J."/>
            <person name="Griggs A."/>
            <person name="Gujja S."/>
            <person name="Hansen M."/>
            <person name="Howarth C."/>
            <person name="Imamovic A."/>
            <person name="Ireland A."/>
            <person name="Larimer J."/>
            <person name="McCowan C."/>
            <person name="Murphy C."/>
            <person name="Pearson M."/>
            <person name="Poon T.W."/>
            <person name="Priest M."/>
            <person name="Roberts A."/>
            <person name="Saif S."/>
            <person name="Shea T."/>
            <person name="Sykes S."/>
            <person name="Wortman J."/>
            <person name="Nusbaum C."/>
            <person name="Birren B."/>
        </authorList>
    </citation>
    <scope>NUCLEOTIDE SEQUENCE [LARGE SCALE GENOMIC DNA]</scope>
    <source>
        <strain>CC55_001C</strain>
    </source>
</reference>
<reference key="2">
    <citation type="journal article" date="2024" name="Nat. Microbiol.">
        <title>BilR is a gut microbial enzyme that reduces bilirubin to urobilinogen.</title>
        <authorList>
            <person name="Hall B."/>
            <person name="Levy S."/>
            <person name="Dufault-Thompson K."/>
            <person name="Arp G."/>
            <person name="Zhong A."/>
            <person name="Ndjite G.M."/>
            <person name="Weiss A."/>
            <person name="Braccia D."/>
            <person name="Jenkins C."/>
            <person name="Grant M.R."/>
            <person name="Abeysinghe S."/>
            <person name="Yang Y."/>
            <person name="Jermain M.D."/>
            <person name="Wu C.H."/>
            <person name="Ma B."/>
            <person name="Jiang X."/>
        </authorList>
    </citation>
    <scope>FUNCTION</scope>
    <scope>CATALYTIC ACTIVITY</scope>
    <scope>PATHWAY</scope>
    <scope>ACTIVE SITE</scope>
    <scope>MUTAGENESIS OF 166-ASP-ARG-167</scope>
</reference>
<gene>
    <name evidence="3" type="primary">bilR</name>
    <name evidence="6" type="ORF">HMPREF1201_01912</name>
</gene>
<organism>
    <name type="scientific">Mediterraneibacter gnavus (strain CC55_001C)</name>
    <dbReference type="NCBI Taxonomy" id="1073375"/>
    <lineage>
        <taxon>Bacteria</taxon>
        <taxon>Bacillati</taxon>
        <taxon>Bacillota</taxon>
        <taxon>Clostridia</taxon>
        <taxon>Lachnospirales</taxon>
        <taxon>Lachnospiraceae</taxon>
        <taxon>Mediterraneibacter</taxon>
    </lineage>
</organism>
<keyword id="KW-0004">4Fe-4S</keyword>
<keyword id="KW-0274">FAD</keyword>
<keyword id="KW-0285">Flavoprotein</keyword>
<keyword id="KW-0288">FMN</keyword>
<keyword id="KW-0408">Iron</keyword>
<keyword id="KW-0411">Iron-sulfur</keyword>
<keyword id="KW-0479">Metal-binding</keyword>
<keyword id="KW-0520">NAD</keyword>
<keyword id="KW-0560">Oxidoreductase</keyword>
<keyword id="KW-1185">Reference proteome</keyword>
<evidence type="ECO:0000250" key="1">
    <source>
        <dbReference type="UniProtKB" id="P42593"/>
    </source>
</evidence>
<evidence type="ECO:0000269" key="2">
    <source>
    </source>
</evidence>
<evidence type="ECO:0000303" key="3">
    <source>
    </source>
</evidence>
<evidence type="ECO:0000305" key="4"/>
<evidence type="ECO:0000305" key="5">
    <source>
    </source>
</evidence>
<evidence type="ECO:0000312" key="6">
    <source>
        <dbReference type="EMBL" id="ETD18187.1"/>
    </source>
</evidence>
<accession>A0A829NF98</accession>
<comment type="function">
    <text evidence="2">Bilirubin reductase that catalyzes reduction of mesobilirubin and/or bilirubin to urobilinogen, a key step during heme degradation (PubMed:38172624). Urobilinogen then spontaneously degrades into urobilin, which gives urine its distinctive yellow color (PubMed:38172624).</text>
</comment>
<comment type="catalytic activity">
    <reaction evidence="5">
        <text>urobilinogen + 4 A = (4Z,15Z)-bilirubin IXalpha + 4 AH2</text>
        <dbReference type="Rhea" id="RHEA:79055"/>
        <dbReference type="ChEBI" id="CHEBI:13193"/>
        <dbReference type="ChEBI" id="CHEBI:17499"/>
        <dbReference type="ChEBI" id="CHEBI:57977"/>
        <dbReference type="ChEBI" id="CHEBI:228218"/>
    </reaction>
    <physiologicalReaction direction="right-to-left" evidence="5">
        <dbReference type="Rhea" id="RHEA:79057"/>
    </physiologicalReaction>
</comment>
<comment type="catalytic activity">
    <reaction evidence="5">
        <text>urobilinogen + 2 A = (4Z,15Z)-mesobilirubin IXalpha + 2 AH2</text>
        <dbReference type="Rhea" id="RHEA:79063"/>
        <dbReference type="ChEBI" id="CHEBI:13193"/>
        <dbReference type="ChEBI" id="CHEBI:17499"/>
        <dbReference type="ChEBI" id="CHEBI:228218"/>
        <dbReference type="ChEBI" id="CHEBI:229696"/>
    </reaction>
    <physiologicalReaction direction="right-to-left" evidence="5">
        <dbReference type="Rhea" id="RHEA:79065"/>
    </physiologicalReaction>
</comment>
<comment type="cofactor">
    <cofactor evidence="1">
        <name>FAD</name>
        <dbReference type="ChEBI" id="CHEBI:57692"/>
    </cofactor>
</comment>
<comment type="cofactor">
    <cofactor evidence="1">
        <name>FMN</name>
        <dbReference type="ChEBI" id="CHEBI:58210"/>
    </cofactor>
</comment>
<comment type="cofactor">
    <cofactor evidence="1">
        <name>[4Fe-4S] cluster</name>
        <dbReference type="ChEBI" id="CHEBI:49883"/>
    </cofactor>
</comment>
<comment type="pathway">
    <text evidence="2">Porphyrin-containing compound metabolism; protoheme degradation.</text>
</comment>
<comment type="miscellaneous">
    <text evidence="2">Bilirubin reductase is a key enzyme in the human gut microbiome (PubMed:38172624). The enzyme is essential to human health, as excess serum bilirubin can cause jaundice and even neurological damage (PubMed:38172624). BilR is nearly universally present in the gut microbiome of healthy adults, while the prevalence of the gene is much lower in patients with inflammatory bowel disease (IBD) and in infants, especially during the first few months of life when infants are most susceptible to developing jaundice (PubMed:38172624).</text>
</comment>
<comment type="similarity">
    <text evidence="4">In the N-terminal section; belongs to the NADH:flavin oxidoreductase/NADH oxidase family.</text>
</comment>
<name>BILR_MEDG5</name>
<proteinExistence type="evidence at protein level"/>
<feature type="chain" id="PRO_0000460431" description="Bilirubin reductase">
    <location>
        <begin position="1"/>
        <end position="641"/>
    </location>
</feature>
<feature type="active site" description="Proton donor" evidence="5">
    <location>
        <position position="167"/>
    </location>
</feature>
<feature type="binding site" evidence="1">
    <location>
        <position position="96"/>
    </location>
    <ligand>
        <name>FMN</name>
        <dbReference type="ChEBI" id="CHEBI:58210"/>
    </ligand>
</feature>
<feature type="binding site" evidence="1">
    <location>
        <position position="214"/>
    </location>
    <ligand>
        <name>FMN</name>
        <dbReference type="ChEBI" id="CHEBI:58210"/>
    </ligand>
</feature>
<feature type="binding site" evidence="1">
    <location>
        <position position="295"/>
    </location>
    <ligand>
        <name>FMN</name>
        <dbReference type="ChEBI" id="CHEBI:58210"/>
    </ligand>
</feature>
<feature type="binding site" evidence="1">
    <location>
        <begin position="317"/>
        <end position="318"/>
    </location>
    <ligand>
        <name>FMN</name>
        <dbReference type="ChEBI" id="CHEBI:58210"/>
    </ligand>
</feature>
<feature type="binding site" evidence="1">
    <location>
        <position position="341"/>
    </location>
    <ligand>
        <name>[4Fe-4S] cluster</name>
        <dbReference type="ChEBI" id="CHEBI:49883"/>
    </ligand>
</feature>
<feature type="binding site" evidence="1">
    <location>
        <position position="344"/>
    </location>
    <ligand>
        <name>[4Fe-4S] cluster</name>
        <dbReference type="ChEBI" id="CHEBI:49883"/>
    </ligand>
</feature>
<feature type="binding site" evidence="1">
    <location>
        <position position="348"/>
    </location>
    <ligand>
        <name>[4Fe-4S] cluster</name>
        <dbReference type="ChEBI" id="CHEBI:49883"/>
    </ligand>
</feature>
<feature type="binding site" evidence="1">
    <location>
        <position position="360"/>
    </location>
    <ligand>
        <name>[4Fe-4S] cluster</name>
        <dbReference type="ChEBI" id="CHEBI:49883"/>
    </ligand>
</feature>
<feature type="binding site" evidence="1">
    <location>
        <position position="391"/>
    </location>
    <ligand>
        <name>FAD</name>
        <dbReference type="ChEBI" id="CHEBI:57692"/>
    </ligand>
</feature>
<feature type="binding site" evidence="1">
    <location>
        <position position="410"/>
    </location>
    <ligand>
        <name>FAD</name>
        <dbReference type="ChEBI" id="CHEBI:57692"/>
    </ligand>
</feature>
<feature type="binding site" evidence="1">
    <location>
        <position position="418"/>
    </location>
    <ligand>
        <name>FAD</name>
        <dbReference type="ChEBI" id="CHEBI:57692"/>
    </ligand>
</feature>
<feature type="binding site" evidence="1">
    <location>
        <position position="428"/>
    </location>
    <ligand>
        <name>FAD</name>
        <dbReference type="ChEBI" id="CHEBI:57692"/>
    </ligand>
</feature>
<feature type="binding site" evidence="1">
    <location>
        <position position="455"/>
    </location>
    <ligand>
        <name>FAD</name>
        <dbReference type="ChEBI" id="CHEBI:57692"/>
    </ligand>
</feature>
<feature type="site" description="Important for catalytic activity, assists active site Arg in protonation of C4" evidence="1">
    <location>
        <position position="256"/>
    </location>
</feature>
<feature type="mutagenesis site" description="Strongly reduced bilirubin reductase activity." evidence="2">
    <original>DR</original>
    <variation>AA</variation>
    <location>
        <begin position="166"/>
        <end position="167"/>
    </location>
</feature>